<accession>P81737</accession>
<reference key="1">
    <citation type="journal article" date="1996" name="Regul. Pept.">
        <title>Isolation of five tachykinin-related peptides from the midgut of the cockroach Leucophaea maderae: existence of N-terminally extended isoforms.</title>
        <authorList>
            <person name="Muren J.E."/>
            <person name="Naessel D.R."/>
        </authorList>
    </citation>
    <scope>PROTEIN SEQUENCE</scope>
    <scope>AMIDATION AT ARG-10</scope>
    <source>
        <tissue>Midgut</tissue>
    </source>
</reference>
<reference key="2">
    <citation type="journal article" date="1997" name="Peptides">
        <title>Seven tachykinin-related peptides isolated from the brain of the madeira cockroach; evidence for tissue-specific expression of isoforms.</title>
        <authorList>
            <person name="Muren J.E."/>
            <person name="Naessel D.R."/>
        </authorList>
    </citation>
    <scope>PROTEIN SEQUENCE</scope>
    <scope>MASS SPECTROMETRY</scope>
    <source>
        <tissue>Brain</tissue>
    </source>
</reference>
<protein>
    <recommendedName>
        <fullName>Tachykinin-related peptide 5</fullName>
        <shortName>LemTRP 5</shortName>
    </recommendedName>
</protein>
<comment type="function">
    <text>Myoactive peptide. Increases the amplitude and frequency of spontaneous contractions and tonus of hindgut muscle.</text>
</comment>
<comment type="subcellular location">
    <subcellularLocation>
        <location>Secreted</location>
    </subcellularLocation>
</comment>
<comment type="tissue specificity">
    <text>Midgut and brain.</text>
</comment>
<comment type="mass spectrometry" mass="1033.2" method="MALDI" evidence="2"/>
<organism>
    <name type="scientific">Rhyparobia maderae</name>
    <name type="common">Madeira cockroach</name>
    <name type="synonym">Leucophaea maderae</name>
    <dbReference type="NCBI Taxonomy" id="36963"/>
    <lineage>
        <taxon>Eukaryota</taxon>
        <taxon>Metazoa</taxon>
        <taxon>Ecdysozoa</taxon>
        <taxon>Arthropoda</taxon>
        <taxon>Hexapoda</taxon>
        <taxon>Insecta</taxon>
        <taxon>Pterygota</taxon>
        <taxon>Neoptera</taxon>
        <taxon>Polyneoptera</taxon>
        <taxon>Dictyoptera</taxon>
        <taxon>Blattodea</taxon>
        <taxon>Blaberoidea</taxon>
        <taxon>Blaberidae</taxon>
        <taxon>Oxyhaloinae</taxon>
        <taxon>Rhyparobia</taxon>
    </lineage>
</organism>
<name>TRP5_RHYMA</name>
<proteinExistence type="evidence at protein level"/>
<dbReference type="GO" id="GO:0005576">
    <property type="term" value="C:extracellular region"/>
    <property type="evidence" value="ECO:0007669"/>
    <property type="project" value="UniProtKB-SubCell"/>
</dbReference>
<dbReference type="GO" id="GO:0007218">
    <property type="term" value="P:neuropeptide signaling pathway"/>
    <property type="evidence" value="ECO:0007669"/>
    <property type="project" value="UniProtKB-KW"/>
</dbReference>
<dbReference type="InterPro" id="IPR013206">
    <property type="entry name" value="Lem_TRP"/>
</dbReference>
<dbReference type="Pfam" id="PF08262">
    <property type="entry name" value="Lem_TRP"/>
    <property type="match status" value="1"/>
</dbReference>
<sequence length="10" mass="1033">APAMGFQGVR</sequence>
<feature type="peptide" id="PRO_0000044440" description="Tachykinin-related peptide 5">
    <location>
        <begin position="1"/>
        <end position="10"/>
    </location>
</feature>
<feature type="modified residue" description="Arginine amide" evidence="1">
    <location>
        <position position="10"/>
    </location>
</feature>
<keyword id="KW-0027">Amidation</keyword>
<keyword id="KW-0903">Direct protein sequencing</keyword>
<keyword id="KW-0527">Neuropeptide</keyword>
<keyword id="KW-0964">Secreted</keyword>
<evidence type="ECO:0000269" key="1">
    <source>
    </source>
</evidence>
<evidence type="ECO:0000269" key="2">
    <source>
    </source>
</evidence>